<organism>
    <name type="scientific">Salinispora arenicola (strain CNS-205)</name>
    <dbReference type="NCBI Taxonomy" id="391037"/>
    <lineage>
        <taxon>Bacteria</taxon>
        <taxon>Bacillati</taxon>
        <taxon>Actinomycetota</taxon>
        <taxon>Actinomycetes</taxon>
        <taxon>Micromonosporales</taxon>
        <taxon>Micromonosporaceae</taxon>
        <taxon>Salinispora</taxon>
    </lineage>
</organism>
<protein>
    <recommendedName>
        <fullName evidence="1">3-dehydroquinate dehydratase</fullName>
        <shortName evidence="1">3-dehydroquinase</shortName>
        <ecNumber evidence="1">4.2.1.10</ecNumber>
    </recommendedName>
    <alternativeName>
        <fullName evidence="1">Type II DHQase</fullName>
    </alternativeName>
</protein>
<reference key="1">
    <citation type="submission" date="2007-10" db="EMBL/GenBank/DDBJ databases">
        <title>Complete sequence of Salinispora arenicola CNS-205.</title>
        <authorList>
            <consortium name="US DOE Joint Genome Institute"/>
            <person name="Copeland A."/>
            <person name="Lucas S."/>
            <person name="Lapidus A."/>
            <person name="Barry K."/>
            <person name="Glavina del Rio T."/>
            <person name="Dalin E."/>
            <person name="Tice H."/>
            <person name="Pitluck S."/>
            <person name="Foster B."/>
            <person name="Schmutz J."/>
            <person name="Larimer F."/>
            <person name="Land M."/>
            <person name="Hauser L."/>
            <person name="Kyrpides N."/>
            <person name="Ivanova N."/>
            <person name="Jensen P.R."/>
            <person name="Moore B.S."/>
            <person name="Penn K."/>
            <person name="Jenkins C."/>
            <person name="Udwary D."/>
            <person name="Xiang L."/>
            <person name="Gontang E."/>
            <person name="Richardson P."/>
        </authorList>
    </citation>
    <scope>NUCLEOTIDE SEQUENCE [LARGE SCALE GENOMIC DNA]</scope>
    <source>
        <strain>CNS-205</strain>
    </source>
</reference>
<name>AROQ_SALAI</name>
<evidence type="ECO:0000255" key="1">
    <source>
        <dbReference type="HAMAP-Rule" id="MF_00169"/>
    </source>
</evidence>
<feature type="chain" id="PRO_1000077057" description="3-dehydroquinate dehydratase">
    <location>
        <begin position="1"/>
        <end position="143"/>
    </location>
</feature>
<feature type="active site" description="Proton acceptor" evidence="1">
    <location>
        <position position="22"/>
    </location>
</feature>
<feature type="active site" description="Proton donor" evidence="1">
    <location>
        <position position="99"/>
    </location>
</feature>
<feature type="binding site" evidence="1">
    <location>
        <position position="73"/>
    </location>
    <ligand>
        <name>substrate</name>
    </ligand>
</feature>
<feature type="binding site" evidence="1">
    <location>
        <position position="79"/>
    </location>
    <ligand>
        <name>substrate</name>
    </ligand>
</feature>
<feature type="binding site" evidence="1">
    <location>
        <position position="86"/>
    </location>
    <ligand>
        <name>substrate</name>
    </ligand>
</feature>
<feature type="binding site" evidence="1">
    <location>
        <begin position="100"/>
        <end position="101"/>
    </location>
    <ligand>
        <name>substrate</name>
    </ligand>
</feature>
<feature type="binding site" evidence="1">
    <location>
        <position position="110"/>
    </location>
    <ligand>
        <name>substrate</name>
    </ligand>
</feature>
<feature type="site" description="Transition state stabilizer" evidence="1">
    <location>
        <position position="17"/>
    </location>
</feature>
<proteinExistence type="inferred from homology"/>
<accession>A8LY09</accession>
<comment type="function">
    <text evidence="1">Catalyzes a trans-dehydration via an enolate intermediate.</text>
</comment>
<comment type="catalytic activity">
    <reaction evidence="1">
        <text>3-dehydroquinate = 3-dehydroshikimate + H2O</text>
        <dbReference type="Rhea" id="RHEA:21096"/>
        <dbReference type="ChEBI" id="CHEBI:15377"/>
        <dbReference type="ChEBI" id="CHEBI:16630"/>
        <dbReference type="ChEBI" id="CHEBI:32364"/>
        <dbReference type="EC" id="4.2.1.10"/>
    </reaction>
</comment>
<comment type="pathway">
    <text evidence="1">Metabolic intermediate biosynthesis; chorismate biosynthesis; chorismate from D-erythrose 4-phosphate and phosphoenolpyruvate: step 3/7.</text>
</comment>
<comment type="subunit">
    <text evidence="1">Homododecamer.</text>
</comment>
<comment type="similarity">
    <text evidence="1">Belongs to the type-II 3-dehydroquinase family.</text>
</comment>
<gene>
    <name evidence="1" type="primary">aroQ</name>
    <name type="ordered locus">Sare_1841</name>
</gene>
<sequence length="143" mass="15658">MRVYVLNGPNLGRLGTRQPEVYGTTTYADLVELCQRTGRELGLEVVVRQTDAEHELLGWLHEAADLGAAVVLNPAAWSHYSVAVRDACALLRAPLVEVHISNIHAREPFRHQSVVSAVATGVICGLGVDGYRLALYHLAARHR</sequence>
<dbReference type="EC" id="4.2.1.10" evidence="1"/>
<dbReference type="EMBL" id="CP000850">
    <property type="protein sequence ID" value="ABV97726.1"/>
    <property type="molecule type" value="Genomic_DNA"/>
</dbReference>
<dbReference type="SMR" id="A8LY09"/>
<dbReference type="STRING" id="391037.Sare_1841"/>
<dbReference type="KEGG" id="saq:Sare_1841"/>
<dbReference type="PATRIC" id="fig|391037.6.peg.1869"/>
<dbReference type="eggNOG" id="COG0757">
    <property type="taxonomic scope" value="Bacteria"/>
</dbReference>
<dbReference type="HOGENOM" id="CLU_090968_2_1_11"/>
<dbReference type="OrthoDB" id="9790793at2"/>
<dbReference type="UniPathway" id="UPA00053">
    <property type="reaction ID" value="UER00086"/>
</dbReference>
<dbReference type="GO" id="GO:0003855">
    <property type="term" value="F:3-dehydroquinate dehydratase activity"/>
    <property type="evidence" value="ECO:0007669"/>
    <property type="project" value="UniProtKB-UniRule"/>
</dbReference>
<dbReference type="GO" id="GO:0008652">
    <property type="term" value="P:amino acid biosynthetic process"/>
    <property type="evidence" value="ECO:0007669"/>
    <property type="project" value="UniProtKB-KW"/>
</dbReference>
<dbReference type="GO" id="GO:0009073">
    <property type="term" value="P:aromatic amino acid family biosynthetic process"/>
    <property type="evidence" value="ECO:0007669"/>
    <property type="project" value="UniProtKB-KW"/>
</dbReference>
<dbReference type="GO" id="GO:0009423">
    <property type="term" value="P:chorismate biosynthetic process"/>
    <property type="evidence" value="ECO:0007669"/>
    <property type="project" value="UniProtKB-UniRule"/>
</dbReference>
<dbReference type="GO" id="GO:0019631">
    <property type="term" value="P:quinate catabolic process"/>
    <property type="evidence" value="ECO:0007669"/>
    <property type="project" value="TreeGrafter"/>
</dbReference>
<dbReference type="CDD" id="cd00466">
    <property type="entry name" value="DHQase_II"/>
    <property type="match status" value="1"/>
</dbReference>
<dbReference type="Gene3D" id="3.40.50.9100">
    <property type="entry name" value="Dehydroquinase, class II"/>
    <property type="match status" value="1"/>
</dbReference>
<dbReference type="HAMAP" id="MF_00169">
    <property type="entry name" value="AroQ"/>
    <property type="match status" value="1"/>
</dbReference>
<dbReference type="InterPro" id="IPR001874">
    <property type="entry name" value="DHquinase_II"/>
</dbReference>
<dbReference type="InterPro" id="IPR018509">
    <property type="entry name" value="DHquinase_II_CS"/>
</dbReference>
<dbReference type="InterPro" id="IPR036441">
    <property type="entry name" value="DHquinase_II_sf"/>
</dbReference>
<dbReference type="NCBIfam" id="TIGR01088">
    <property type="entry name" value="aroQ"/>
    <property type="match status" value="1"/>
</dbReference>
<dbReference type="NCBIfam" id="NF003805">
    <property type="entry name" value="PRK05395.1-2"/>
    <property type="match status" value="1"/>
</dbReference>
<dbReference type="NCBIfam" id="NF003806">
    <property type="entry name" value="PRK05395.1-3"/>
    <property type="match status" value="1"/>
</dbReference>
<dbReference type="NCBIfam" id="NF003807">
    <property type="entry name" value="PRK05395.1-4"/>
    <property type="match status" value="1"/>
</dbReference>
<dbReference type="PANTHER" id="PTHR21272">
    <property type="entry name" value="CATABOLIC 3-DEHYDROQUINASE"/>
    <property type="match status" value="1"/>
</dbReference>
<dbReference type="PANTHER" id="PTHR21272:SF3">
    <property type="entry name" value="CATABOLIC 3-DEHYDROQUINASE"/>
    <property type="match status" value="1"/>
</dbReference>
<dbReference type="Pfam" id="PF01220">
    <property type="entry name" value="DHquinase_II"/>
    <property type="match status" value="1"/>
</dbReference>
<dbReference type="PIRSF" id="PIRSF001399">
    <property type="entry name" value="DHquinase_II"/>
    <property type="match status" value="1"/>
</dbReference>
<dbReference type="SUPFAM" id="SSF52304">
    <property type="entry name" value="Type II 3-dehydroquinate dehydratase"/>
    <property type="match status" value="1"/>
</dbReference>
<dbReference type="PROSITE" id="PS01029">
    <property type="entry name" value="DEHYDROQUINASE_II"/>
    <property type="match status" value="1"/>
</dbReference>
<keyword id="KW-0028">Amino-acid biosynthesis</keyword>
<keyword id="KW-0057">Aromatic amino acid biosynthesis</keyword>
<keyword id="KW-0456">Lyase</keyword>